<keyword id="KW-0067">ATP-binding</keyword>
<keyword id="KW-0547">Nucleotide-binding</keyword>
<keyword id="KW-0548">Nucleotidyltransferase</keyword>
<keyword id="KW-0808">Transferase</keyword>
<gene>
    <name evidence="1" type="primary">cysD</name>
    <name type="ordered locus">ACIAD1072</name>
</gene>
<proteinExistence type="inferred from homology"/>
<dbReference type="EC" id="2.7.7.4" evidence="1"/>
<dbReference type="EMBL" id="CR543861">
    <property type="protein sequence ID" value="CAG67959.1"/>
    <property type="molecule type" value="Genomic_DNA"/>
</dbReference>
<dbReference type="SMR" id="Q6FDA0"/>
<dbReference type="STRING" id="202950.GCA_001485005_01293"/>
<dbReference type="KEGG" id="aci:ACIAD1072"/>
<dbReference type="eggNOG" id="COG0175">
    <property type="taxonomic scope" value="Bacteria"/>
</dbReference>
<dbReference type="HOGENOM" id="CLU_043026_0_0_6"/>
<dbReference type="OrthoDB" id="9772604at2"/>
<dbReference type="BioCyc" id="ASP62977:ACIAD_RS04940-MONOMER"/>
<dbReference type="UniPathway" id="UPA00140">
    <property type="reaction ID" value="UER00204"/>
</dbReference>
<dbReference type="Proteomes" id="UP000000430">
    <property type="component" value="Chromosome"/>
</dbReference>
<dbReference type="GO" id="GO:0005524">
    <property type="term" value="F:ATP binding"/>
    <property type="evidence" value="ECO:0007669"/>
    <property type="project" value="UniProtKB-KW"/>
</dbReference>
<dbReference type="GO" id="GO:0004781">
    <property type="term" value="F:sulfate adenylyltransferase (ATP) activity"/>
    <property type="evidence" value="ECO:0007669"/>
    <property type="project" value="UniProtKB-UniRule"/>
</dbReference>
<dbReference type="GO" id="GO:0070814">
    <property type="term" value="P:hydrogen sulfide biosynthetic process"/>
    <property type="evidence" value="ECO:0007669"/>
    <property type="project" value="UniProtKB-UniRule"/>
</dbReference>
<dbReference type="GO" id="GO:0000103">
    <property type="term" value="P:sulfate assimilation"/>
    <property type="evidence" value="ECO:0007669"/>
    <property type="project" value="UniProtKB-UniRule"/>
</dbReference>
<dbReference type="CDD" id="cd23946">
    <property type="entry name" value="Sulfate_adenylyltransferase_2"/>
    <property type="match status" value="1"/>
</dbReference>
<dbReference type="FunFam" id="3.40.50.620:FF:000002">
    <property type="entry name" value="Sulfate adenylyltransferase subunit 2"/>
    <property type="match status" value="1"/>
</dbReference>
<dbReference type="Gene3D" id="3.40.50.620">
    <property type="entry name" value="HUPs"/>
    <property type="match status" value="1"/>
</dbReference>
<dbReference type="HAMAP" id="MF_00064">
    <property type="entry name" value="Sulf_adenylyltr_sub2"/>
    <property type="match status" value="1"/>
</dbReference>
<dbReference type="InterPro" id="IPR002500">
    <property type="entry name" value="PAPS_reduct_dom"/>
</dbReference>
<dbReference type="InterPro" id="IPR014729">
    <property type="entry name" value="Rossmann-like_a/b/a_fold"/>
</dbReference>
<dbReference type="InterPro" id="IPR011784">
    <property type="entry name" value="SO4_adenylTrfase_ssu"/>
</dbReference>
<dbReference type="InterPro" id="IPR050128">
    <property type="entry name" value="Sulfate_adenylyltrnsfr_sub2"/>
</dbReference>
<dbReference type="NCBIfam" id="TIGR02039">
    <property type="entry name" value="CysD"/>
    <property type="match status" value="1"/>
</dbReference>
<dbReference type="NCBIfam" id="NF003587">
    <property type="entry name" value="PRK05253.1"/>
    <property type="match status" value="1"/>
</dbReference>
<dbReference type="NCBIfam" id="NF009214">
    <property type="entry name" value="PRK12563.1"/>
    <property type="match status" value="1"/>
</dbReference>
<dbReference type="PANTHER" id="PTHR43196">
    <property type="entry name" value="SULFATE ADENYLYLTRANSFERASE SUBUNIT 2"/>
    <property type="match status" value="1"/>
</dbReference>
<dbReference type="PANTHER" id="PTHR43196:SF1">
    <property type="entry name" value="SULFATE ADENYLYLTRANSFERASE SUBUNIT 2"/>
    <property type="match status" value="1"/>
</dbReference>
<dbReference type="Pfam" id="PF01507">
    <property type="entry name" value="PAPS_reduct"/>
    <property type="match status" value="1"/>
</dbReference>
<dbReference type="PIRSF" id="PIRSF002936">
    <property type="entry name" value="CysDAde_trans"/>
    <property type="match status" value="1"/>
</dbReference>
<dbReference type="SUPFAM" id="SSF52402">
    <property type="entry name" value="Adenine nucleotide alpha hydrolases-like"/>
    <property type="match status" value="1"/>
</dbReference>
<organism>
    <name type="scientific">Acinetobacter baylyi (strain ATCC 33305 / BD413 / ADP1)</name>
    <dbReference type="NCBI Taxonomy" id="62977"/>
    <lineage>
        <taxon>Bacteria</taxon>
        <taxon>Pseudomonadati</taxon>
        <taxon>Pseudomonadota</taxon>
        <taxon>Gammaproteobacteria</taxon>
        <taxon>Moraxellales</taxon>
        <taxon>Moraxellaceae</taxon>
        <taxon>Acinetobacter</taxon>
    </lineage>
</organism>
<name>CYSD_ACIAD</name>
<feature type="chain" id="PRO_1000008950" description="Sulfate adenylyltransferase subunit 2">
    <location>
        <begin position="1"/>
        <end position="304"/>
    </location>
</feature>
<protein>
    <recommendedName>
        <fullName evidence="1">Sulfate adenylyltransferase subunit 2</fullName>
        <ecNumber evidence="1">2.7.7.4</ecNumber>
    </recommendedName>
    <alternativeName>
        <fullName evidence="1">ATP-sulfurylase small subunit</fullName>
    </alternativeName>
    <alternativeName>
        <fullName evidence="1">Sulfate adenylate transferase</fullName>
        <shortName evidence="1">SAT</shortName>
    </alternativeName>
</protein>
<reference key="1">
    <citation type="journal article" date="2004" name="Nucleic Acids Res.">
        <title>Unique features revealed by the genome sequence of Acinetobacter sp. ADP1, a versatile and naturally transformation competent bacterium.</title>
        <authorList>
            <person name="Barbe V."/>
            <person name="Vallenet D."/>
            <person name="Fonknechten N."/>
            <person name="Kreimeyer A."/>
            <person name="Oztas S."/>
            <person name="Labarre L."/>
            <person name="Cruveiller S."/>
            <person name="Robert C."/>
            <person name="Duprat S."/>
            <person name="Wincker P."/>
            <person name="Ornston L.N."/>
            <person name="Weissenbach J."/>
            <person name="Marliere P."/>
            <person name="Cohen G.N."/>
            <person name="Medigue C."/>
        </authorList>
    </citation>
    <scope>NUCLEOTIDE SEQUENCE [LARGE SCALE GENOMIC DNA]</scope>
    <source>
        <strain>ATCC 33305 / BD413 / ADP1</strain>
    </source>
</reference>
<evidence type="ECO:0000255" key="1">
    <source>
        <dbReference type="HAMAP-Rule" id="MF_00064"/>
    </source>
</evidence>
<comment type="function">
    <text evidence="1">With CysN forms the ATP sulfurylase (ATPS) that catalyzes the adenylation of sulfate producing adenosine 5'-phosphosulfate (APS) and diphosphate, the first enzymatic step in sulfur assimilation pathway. APS synthesis involves the formation of a high-energy phosphoric-sulfuric acid anhydride bond driven by GTP hydrolysis by CysN coupled to ATP hydrolysis by CysD.</text>
</comment>
<comment type="catalytic activity">
    <reaction evidence="1">
        <text>sulfate + ATP + H(+) = adenosine 5'-phosphosulfate + diphosphate</text>
        <dbReference type="Rhea" id="RHEA:18133"/>
        <dbReference type="ChEBI" id="CHEBI:15378"/>
        <dbReference type="ChEBI" id="CHEBI:16189"/>
        <dbReference type="ChEBI" id="CHEBI:30616"/>
        <dbReference type="ChEBI" id="CHEBI:33019"/>
        <dbReference type="ChEBI" id="CHEBI:58243"/>
        <dbReference type="EC" id="2.7.7.4"/>
    </reaction>
</comment>
<comment type="pathway">
    <text evidence="1">Sulfur metabolism; hydrogen sulfide biosynthesis; sulfite from sulfate: step 1/3.</text>
</comment>
<comment type="subunit">
    <text evidence="1">Heterodimer composed of CysD, the smaller subunit, and CysN.</text>
</comment>
<comment type="similarity">
    <text evidence="1">Belongs to the PAPS reductase family. CysD subfamily.</text>
</comment>
<sequence>MLMTEDRLTHLKQLEAESIHIIREVAAEFENPVMLYSIGKDSAVMLHLALKAFYPAKLPFPLLHVDTGWKFKDMIAFRDNMAKTHGFDLIVHQNKEGREAGINPFDHGSSKYTDIMKTQGLKQALDKYQFDAAFGGARRDEEKSRAKERVYSFRDTKHRWDPKNQRPELWSLYNGKVNKGESIRVFPLSNWTELDIWQYIYLENIQIVPLYFSAVRPVVERSGTLIMVDDERMRLKEGEVPQMKSVRFRTLGCYPLTGAVESEADTLPEIIQEMLLATSSERQGRMIDHDEAGSMEKKKQEGYF</sequence>
<accession>Q6FDA0</accession>